<evidence type="ECO:0000250" key="1">
    <source>
        <dbReference type="UniProtKB" id="A0A7G5KET3"/>
    </source>
</evidence>
<evidence type="ECO:0000250" key="2">
    <source>
        <dbReference type="UniProtKB" id="P00558"/>
    </source>
</evidence>
<evidence type="ECO:0000250" key="3">
    <source>
        <dbReference type="UniProtKB" id="P00560"/>
    </source>
</evidence>
<evidence type="ECO:0000250" key="4">
    <source>
        <dbReference type="UniProtKB" id="Q7SIB7"/>
    </source>
</evidence>
<evidence type="ECO:0000305" key="5"/>
<proteinExistence type="inferred from homology"/>
<accession>P14228</accession>
<organism>
    <name type="scientific">Hypocrea jecorina</name>
    <name type="common">Trichoderma reesei</name>
    <dbReference type="NCBI Taxonomy" id="51453"/>
    <lineage>
        <taxon>Eukaryota</taxon>
        <taxon>Fungi</taxon>
        <taxon>Dikarya</taxon>
        <taxon>Ascomycota</taxon>
        <taxon>Pezizomycotina</taxon>
        <taxon>Sordariomycetes</taxon>
        <taxon>Hypocreomycetidae</taxon>
        <taxon>Hypocreales</taxon>
        <taxon>Hypocreaceae</taxon>
        <taxon>Trichoderma</taxon>
    </lineage>
</organism>
<dbReference type="EC" id="2.7.2.3" evidence="3"/>
<dbReference type="EMBL" id="X15764">
    <property type="protein sequence ID" value="CAA33770.1"/>
    <property type="molecule type" value="Genomic_DNA"/>
</dbReference>
<dbReference type="PIR" id="S07803">
    <property type="entry name" value="TVTQGR"/>
</dbReference>
<dbReference type="SMR" id="P14228"/>
<dbReference type="UniPathway" id="UPA00109">
    <property type="reaction ID" value="UER00185"/>
</dbReference>
<dbReference type="GO" id="GO:0005829">
    <property type="term" value="C:cytosol"/>
    <property type="evidence" value="ECO:0007669"/>
    <property type="project" value="TreeGrafter"/>
</dbReference>
<dbReference type="GO" id="GO:0005739">
    <property type="term" value="C:mitochondrion"/>
    <property type="evidence" value="ECO:0007669"/>
    <property type="project" value="UniProtKB-SubCell"/>
</dbReference>
<dbReference type="GO" id="GO:0043531">
    <property type="term" value="F:ADP binding"/>
    <property type="evidence" value="ECO:0007669"/>
    <property type="project" value="TreeGrafter"/>
</dbReference>
<dbReference type="GO" id="GO:0005524">
    <property type="term" value="F:ATP binding"/>
    <property type="evidence" value="ECO:0007669"/>
    <property type="project" value="UniProtKB-KW"/>
</dbReference>
<dbReference type="GO" id="GO:0046872">
    <property type="term" value="F:metal ion binding"/>
    <property type="evidence" value="ECO:0007669"/>
    <property type="project" value="UniProtKB-KW"/>
</dbReference>
<dbReference type="GO" id="GO:0004618">
    <property type="term" value="F:phosphoglycerate kinase activity"/>
    <property type="evidence" value="ECO:0007669"/>
    <property type="project" value="UniProtKB-EC"/>
</dbReference>
<dbReference type="GO" id="GO:0006094">
    <property type="term" value="P:gluconeogenesis"/>
    <property type="evidence" value="ECO:0007669"/>
    <property type="project" value="TreeGrafter"/>
</dbReference>
<dbReference type="GO" id="GO:0006096">
    <property type="term" value="P:glycolytic process"/>
    <property type="evidence" value="ECO:0007669"/>
    <property type="project" value="UniProtKB-UniPathway"/>
</dbReference>
<dbReference type="CDD" id="cd00318">
    <property type="entry name" value="Phosphoglycerate_kinase"/>
    <property type="match status" value="1"/>
</dbReference>
<dbReference type="FunFam" id="3.40.50.1260:FF:000019">
    <property type="entry name" value="Phosphoglycerate kinase 1"/>
    <property type="match status" value="1"/>
</dbReference>
<dbReference type="FunFam" id="3.40.50.1260:FF:000031">
    <property type="entry name" value="Phosphoglycerate kinase 1"/>
    <property type="match status" value="1"/>
</dbReference>
<dbReference type="Gene3D" id="3.40.50.1260">
    <property type="entry name" value="Phosphoglycerate kinase, N-terminal domain"/>
    <property type="match status" value="3"/>
</dbReference>
<dbReference type="HAMAP" id="MF_00145">
    <property type="entry name" value="Phosphoglyc_kinase"/>
    <property type="match status" value="1"/>
</dbReference>
<dbReference type="InterPro" id="IPR001576">
    <property type="entry name" value="Phosphoglycerate_kinase"/>
</dbReference>
<dbReference type="InterPro" id="IPR015911">
    <property type="entry name" value="Phosphoglycerate_kinase_CS"/>
</dbReference>
<dbReference type="InterPro" id="IPR015824">
    <property type="entry name" value="Phosphoglycerate_kinase_N"/>
</dbReference>
<dbReference type="InterPro" id="IPR036043">
    <property type="entry name" value="Phosphoglycerate_kinase_sf"/>
</dbReference>
<dbReference type="PANTHER" id="PTHR11406">
    <property type="entry name" value="PHOSPHOGLYCERATE KINASE"/>
    <property type="match status" value="1"/>
</dbReference>
<dbReference type="PANTHER" id="PTHR11406:SF0">
    <property type="entry name" value="PHOSPHOGLYCERATE KINASE"/>
    <property type="match status" value="1"/>
</dbReference>
<dbReference type="Pfam" id="PF00162">
    <property type="entry name" value="PGK"/>
    <property type="match status" value="1"/>
</dbReference>
<dbReference type="PIRSF" id="PIRSF000724">
    <property type="entry name" value="Pgk"/>
    <property type="match status" value="1"/>
</dbReference>
<dbReference type="PRINTS" id="PR00477">
    <property type="entry name" value="PHGLYCKINASE"/>
</dbReference>
<dbReference type="SUPFAM" id="SSF53748">
    <property type="entry name" value="Phosphoglycerate kinase"/>
    <property type="match status" value="1"/>
</dbReference>
<dbReference type="PROSITE" id="PS00111">
    <property type="entry name" value="PGLYCERATE_KINASE"/>
    <property type="match status" value="1"/>
</dbReference>
<gene>
    <name type="primary">pgk1</name>
    <name type="synonym">pgk</name>
</gene>
<feature type="chain" id="PRO_0000145890" description="Phosphoglycerate kinase">
    <location>
        <begin position="1"/>
        <end position="416"/>
    </location>
</feature>
<feature type="binding site" evidence="2">
    <location>
        <position position="23"/>
    </location>
    <ligand>
        <name>(2R)-3-phosphoglycerate</name>
        <dbReference type="ChEBI" id="CHEBI:58272"/>
    </ligand>
</feature>
<feature type="binding site" evidence="4">
    <location>
        <position position="24"/>
    </location>
    <ligand>
        <name>(2R)-3-phosphoglycerate</name>
        <dbReference type="ChEBI" id="CHEBI:58272"/>
    </ligand>
</feature>
<feature type="binding site" evidence="2">
    <location>
        <position position="25"/>
    </location>
    <ligand>
        <name>(2R)-3-phosphoglycerate</name>
        <dbReference type="ChEBI" id="CHEBI:58272"/>
    </ligand>
</feature>
<feature type="binding site" evidence="4">
    <location>
        <position position="26"/>
    </location>
    <ligand>
        <name>(2R)-3-phosphoglycerate</name>
        <dbReference type="ChEBI" id="CHEBI:58272"/>
    </ligand>
</feature>
<feature type="binding site" evidence="2">
    <location>
        <position position="39"/>
    </location>
    <ligand>
        <name>(2R)-3-phosphoglycerate</name>
        <dbReference type="ChEBI" id="CHEBI:58272"/>
    </ligand>
</feature>
<feature type="binding site" evidence="4">
    <location>
        <position position="40"/>
    </location>
    <ligand>
        <name>(2R)-3-phosphoglycerate</name>
        <dbReference type="ChEBI" id="CHEBI:58272"/>
    </ligand>
</feature>
<feature type="binding site" evidence="2">
    <location>
        <position position="63"/>
    </location>
    <ligand>
        <name>(2R)-3-phosphoglycerate</name>
        <dbReference type="ChEBI" id="CHEBI:58272"/>
    </ligand>
</feature>
<feature type="binding site" evidence="4">
    <location>
        <position position="64"/>
    </location>
    <ligand>
        <name>(2R)-3-phosphoglycerate</name>
        <dbReference type="ChEBI" id="CHEBI:58272"/>
    </ligand>
</feature>
<feature type="binding site" evidence="2">
    <location>
        <position position="66"/>
    </location>
    <ligand>
        <name>(2R)-3-phosphoglycerate</name>
        <dbReference type="ChEBI" id="CHEBI:58272"/>
    </ligand>
</feature>
<feature type="binding site" evidence="4">
    <location>
        <position position="67"/>
    </location>
    <ligand>
        <name>(2R)-3-phosphoglycerate</name>
        <dbReference type="ChEBI" id="CHEBI:58272"/>
    </ligand>
</feature>
<feature type="binding site" evidence="2">
    <location>
        <position position="122"/>
    </location>
    <ligand>
        <name>(2R)-3-phosphoglycerate</name>
        <dbReference type="ChEBI" id="CHEBI:58272"/>
    </ligand>
</feature>
<feature type="binding site" evidence="4">
    <location>
        <position position="123"/>
    </location>
    <ligand>
        <name>(2R)-3-phosphoglycerate</name>
        <dbReference type="ChEBI" id="CHEBI:58272"/>
    </ligand>
</feature>
<feature type="binding site" evidence="2">
    <location>
        <position position="170"/>
    </location>
    <ligand>
        <name>(2R)-3-phosphoglycerate</name>
        <dbReference type="ChEBI" id="CHEBI:58272"/>
    </ligand>
</feature>
<feature type="binding site" evidence="4">
    <location>
        <position position="171"/>
    </location>
    <ligand>
        <name>(2R)-3-phosphoglycerate</name>
        <dbReference type="ChEBI" id="CHEBI:58272"/>
    </ligand>
</feature>
<feature type="binding site" evidence="2">
    <location>
        <position position="214"/>
    </location>
    <ligand>
        <name>ADP</name>
        <dbReference type="ChEBI" id="CHEBI:456216"/>
    </ligand>
</feature>
<feature type="binding site" evidence="2">
    <location>
        <position position="214"/>
    </location>
    <ligand>
        <name>CDP</name>
        <dbReference type="ChEBI" id="CHEBI:58069"/>
    </ligand>
</feature>
<feature type="binding site" evidence="4">
    <location>
        <position position="215"/>
    </location>
    <ligand>
        <name>AMP</name>
        <dbReference type="ChEBI" id="CHEBI:456215"/>
    </ligand>
</feature>
<feature type="binding site" evidence="4">
    <location>
        <position position="215"/>
    </location>
    <ligand>
        <name>ATP</name>
        <dbReference type="ChEBI" id="CHEBI:30616"/>
    </ligand>
</feature>
<feature type="binding site" evidence="2">
    <location>
        <position position="215"/>
    </location>
    <ligand>
        <name>Mg(2+)</name>
        <dbReference type="ChEBI" id="CHEBI:18420"/>
    </ligand>
</feature>
<feature type="binding site" evidence="4">
    <location>
        <position position="216"/>
    </location>
    <ligand>
        <name>AMP</name>
        <dbReference type="ChEBI" id="CHEBI:456215"/>
    </ligand>
</feature>
<feature type="binding site" evidence="2">
    <location>
        <position position="219"/>
    </location>
    <ligand>
        <name>CDP</name>
        <dbReference type="ChEBI" id="CHEBI:58069"/>
    </ligand>
</feature>
<feature type="binding site" evidence="2">
    <location>
        <position position="219"/>
    </location>
    <ligand>
        <name>Mg(2+)</name>
        <dbReference type="ChEBI" id="CHEBI:18420"/>
    </ligand>
</feature>
<feature type="binding site" evidence="4">
    <location>
        <position position="220"/>
    </location>
    <ligand>
        <name>AMP</name>
        <dbReference type="ChEBI" id="CHEBI:456215"/>
    </ligand>
</feature>
<feature type="binding site" evidence="4">
    <location>
        <position position="220"/>
    </location>
    <ligand>
        <name>ATP</name>
        <dbReference type="ChEBI" id="CHEBI:30616"/>
    </ligand>
</feature>
<feature type="binding site" evidence="2">
    <location>
        <position position="238"/>
    </location>
    <ligand>
        <name>ADP</name>
        <dbReference type="ChEBI" id="CHEBI:456216"/>
    </ligand>
</feature>
<feature type="binding site" evidence="2">
    <location>
        <position position="238"/>
    </location>
    <ligand>
        <name>CDP</name>
        <dbReference type="ChEBI" id="CHEBI:58069"/>
    </ligand>
</feature>
<feature type="binding site" evidence="4">
    <location>
        <position position="239"/>
    </location>
    <ligand>
        <name>AMP</name>
        <dbReference type="ChEBI" id="CHEBI:456215"/>
    </ligand>
</feature>
<feature type="binding site" evidence="4">
    <location>
        <position position="239"/>
    </location>
    <ligand>
        <name>ATP</name>
        <dbReference type="ChEBI" id="CHEBI:30616"/>
    </ligand>
</feature>
<feature type="binding site" evidence="4">
    <location>
        <position position="312"/>
    </location>
    <ligand>
        <name>AMP</name>
        <dbReference type="ChEBI" id="CHEBI:456215"/>
    </ligand>
</feature>
<feature type="binding site" evidence="4">
    <location>
        <position position="312"/>
    </location>
    <ligand>
        <name>ATP</name>
        <dbReference type="ChEBI" id="CHEBI:30616"/>
    </ligand>
</feature>
<feature type="binding site" evidence="2">
    <location>
        <position position="337"/>
    </location>
    <ligand>
        <name>CDP</name>
        <dbReference type="ChEBI" id="CHEBI:58069"/>
    </ligand>
</feature>
<feature type="binding site" evidence="2">
    <location>
        <position position="339"/>
    </location>
    <ligand>
        <name>CDP</name>
        <dbReference type="ChEBI" id="CHEBI:58069"/>
    </ligand>
</feature>
<feature type="binding site" evidence="2">
    <location>
        <position position="342"/>
    </location>
    <ligand>
        <name>ADP</name>
        <dbReference type="ChEBI" id="CHEBI:456216"/>
    </ligand>
</feature>
<feature type="binding site" evidence="2">
    <location>
        <position position="342"/>
    </location>
    <ligand>
        <name>CDP</name>
        <dbReference type="ChEBI" id="CHEBI:58069"/>
    </ligand>
</feature>
<feature type="binding site" evidence="4">
    <location>
        <position position="343"/>
    </location>
    <ligand>
        <name>AMP</name>
        <dbReference type="ChEBI" id="CHEBI:456215"/>
    </ligand>
</feature>
<feature type="binding site" evidence="4">
    <location>
        <position position="343"/>
    </location>
    <ligand>
        <name>ATP</name>
        <dbReference type="ChEBI" id="CHEBI:30616"/>
    </ligand>
</feature>
<feature type="binding site" evidence="4">
    <location>
        <position position="374"/>
    </location>
    <ligand>
        <name>ATP</name>
        <dbReference type="ChEBI" id="CHEBI:30616"/>
    </ligand>
</feature>
<feature type="binding site" evidence="4">
    <location>
        <position position="374"/>
    </location>
    <ligand>
        <name>Mg(2+)</name>
        <dbReference type="ChEBI" id="CHEBI:18420"/>
    </ligand>
</feature>
<feature type="binding site" evidence="4">
    <location>
        <position position="375"/>
    </location>
    <ligand>
        <name>ATP</name>
        <dbReference type="ChEBI" id="CHEBI:30616"/>
    </ligand>
</feature>
<keyword id="KW-0067">ATP-binding</keyword>
<keyword id="KW-0963">Cytoplasm</keyword>
<keyword id="KW-0324">Glycolysis</keyword>
<keyword id="KW-0418">Kinase</keyword>
<keyword id="KW-0460">Magnesium</keyword>
<keyword id="KW-0479">Metal-binding</keyword>
<keyword id="KW-0496">Mitochondrion</keyword>
<keyword id="KW-0547">Nucleotide-binding</keyword>
<keyword id="KW-0808">Transferase</keyword>
<sequence>MSLSNKLSITDVDLKGKRVLIRVDFNVPLDENKKITNNQRIVGAIPTIKHALDNGAKAVVLMSHLGRPNGAVNPKYSLKPVVPELERLLGKPVTFARDCVGPEVESIVNDADNGAVILLENLRFHIEEEGSAKDKDGNKTKADKAKVEEFRKGLTALGDIYINDAFGTAHRAHSSMVGVDLPQKAAGFLMKKELDYFAKALESPQRPFLAILGGAKVSDKIQLIDNLLDKVDTLIVCGGMAFTFKKVLNNIPIGTSLFDEAGAKTCPSCREAKAKNVKLVLPVDYITADKFDKDANTGTATDESGIPDGWMGLDCGEKSIELYKEAIADAKTILWNGPAGVFEFDKFANGTKATLDAVVEGCKNGKIVIIGGGDTATVAAKYGVEDKLSHVSTGGGASLELLEGKELPGVVALSSK</sequence>
<reference key="1">
    <citation type="journal article" date="1989" name="Curr. Genet.">
        <title>Isolation and characterization of the 3-phosphoglycerate kinase gene (pgk) from the filamentous fungus Trichoderma reesei.</title>
        <authorList>
            <person name="Vanhanen S."/>
            <person name="Penttilae M."/>
            <person name="Lehtovaara P."/>
            <person name="Knowles J.K.C."/>
        </authorList>
    </citation>
    <scope>NUCLEOTIDE SEQUENCE [GENOMIC DNA]</scope>
    <source>
        <strain>ATCC 26921 / CBS 392.92 / QM9414</strain>
    </source>
</reference>
<protein>
    <recommendedName>
        <fullName>Phosphoglycerate kinase</fullName>
        <ecNumber evidence="3">2.7.2.3</ecNumber>
    </recommendedName>
</protein>
<comment type="function">
    <text evidence="1 2 3">Catalyzes one of the two ATP producing reactions in the glycolytic pathway via the reversible conversion of 1,3-diphosphoglycerate to 3-phosphoglycerate (By similarity). Both L- and D- forms of purine and pyrimidine nucleotides can be used as substrates, but the activity is much lower on pyrimidines (By similarity). Negatively regulates the biosynthesis of acetyl-CoA from pyruvate in the mitochondrion (By similarity).</text>
</comment>
<comment type="catalytic activity">
    <reaction evidence="3">
        <text>(2R)-3-phosphoglycerate + ATP = (2R)-3-phospho-glyceroyl phosphate + ADP</text>
        <dbReference type="Rhea" id="RHEA:14801"/>
        <dbReference type="ChEBI" id="CHEBI:30616"/>
        <dbReference type="ChEBI" id="CHEBI:57604"/>
        <dbReference type="ChEBI" id="CHEBI:58272"/>
        <dbReference type="ChEBI" id="CHEBI:456216"/>
        <dbReference type="EC" id="2.7.2.3"/>
    </reaction>
</comment>
<comment type="cofactor">
    <cofactor evidence="2">
        <name>Mg(2+)</name>
        <dbReference type="ChEBI" id="CHEBI:18420"/>
    </cofactor>
</comment>
<comment type="pathway">
    <text evidence="3">Carbohydrate degradation; glycolysis; pyruvate from D-glyceraldehyde 3-phosphate: step 2/5.</text>
</comment>
<comment type="subunit">
    <text>Monomer.</text>
</comment>
<comment type="subcellular location">
    <subcellularLocation>
        <location evidence="3">Cytoplasm</location>
    </subcellularLocation>
    <subcellularLocation>
        <location evidence="3">Mitochondrion</location>
    </subcellularLocation>
</comment>
<comment type="similarity">
    <text evidence="5">Belongs to the phosphoglycerate kinase family.</text>
</comment>
<name>PGK_HYPJE</name>